<comment type="function">
    <text evidence="1 2 5">Broad substrate specificity ATP-dependent transporter of the ATP-binding cassette (ABC) family that actively extrudes a wide variety of physiological compounds, dietary toxins and xenobiotics from cells. Involved in porphyrin homeostasis, mediating the export of protoporphyrin IX (PPIX) from both mitochondria to cytosol and cytosol to extracellular space, it also functions in the cellular export of heme. Also mediates the efflux of sphingosine-1-P from cells. Acts as a urate exporter functioning in both renal and extrarenal urate excretion (By similarity). In kidney, it also functions as a physiological exporter of the uremic toxin indoxyl sulfate (By similarity). Also involved in the excretion of steroids like estrone 3-sulfate/E1S, 3beta-sulfooxy-androst-5-en-17-one/DHEAS, and other sulfate conjugates (By similarity). Mediates the secretion of the riboflavin and biotin vitamins into milk. Extrudes pheophorbide a, a phototoxic porphyrin catabolite of chlorophyll, reducing its bioavailability (By similarity). Plays an important role in the exclusion of xenobiotics from the brain. It confers to cells a resistance to multiple drugs and other xenobiotics including mitoxantrone, pheophorbide, camptothecin, methotrexate, azidothymidine, and the anthracyclines daunorubicin and doxorubicin, through the control of their efflux (By similarity). In placenta, it limits the penetration of drugs from the maternal plasma into the fetus. May play a role in early stem cell self-renewal by blocking differentiation (PubMed:15516692). In inflammatory macrophages, exports itaconate from the cytosol to the extracellular compartment and limits the activation of TFEB-dependent lysosome biogenesis involved in antibacterial innate immune response.</text>
</comment>
<comment type="catalytic activity">
    <reaction evidence="2">
        <text>ATP + H2O + xenobioticSide 1 = ADP + phosphate + xenobioticSide 2.</text>
        <dbReference type="EC" id="7.6.2.2"/>
    </reaction>
</comment>
<comment type="catalytic activity">
    <reaction evidence="2">
        <text>urate(in) + ATP + H2O = urate(out) + ADP + phosphate + H(+)</text>
        <dbReference type="Rhea" id="RHEA:16461"/>
        <dbReference type="ChEBI" id="CHEBI:15377"/>
        <dbReference type="ChEBI" id="CHEBI:15378"/>
        <dbReference type="ChEBI" id="CHEBI:17775"/>
        <dbReference type="ChEBI" id="CHEBI:30616"/>
        <dbReference type="ChEBI" id="CHEBI:43474"/>
        <dbReference type="ChEBI" id="CHEBI:456216"/>
    </reaction>
    <physiologicalReaction direction="left-to-right" evidence="2">
        <dbReference type="Rhea" id="RHEA:16462"/>
    </physiologicalReaction>
</comment>
<comment type="catalytic activity">
    <reaction evidence="1">
        <text>indoxyl sulfate(in) + ATP + H2O = indoxyl sulfate(out) + ADP + phosphate + H(+)</text>
        <dbReference type="Rhea" id="RHEA:61332"/>
        <dbReference type="ChEBI" id="CHEBI:15377"/>
        <dbReference type="ChEBI" id="CHEBI:15378"/>
        <dbReference type="ChEBI" id="CHEBI:30616"/>
        <dbReference type="ChEBI" id="CHEBI:43474"/>
        <dbReference type="ChEBI" id="CHEBI:144643"/>
        <dbReference type="ChEBI" id="CHEBI:456216"/>
    </reaction>
    <physiologicalReaction direction="left-to-right" evidence="1">
        <dbReference type="Rhea" id="RHEA:61333"/>
    </physiologicalReaction>
</comment>
<comment type="catalytic activity">
    <reaction evidence="2">
        <text>sphing-4-enine 1-phosphate(in) + ATP + H2O = sphing-4-enine 1-phosphate(out) + ADP + phosphate + H(+)</text>
        <dbReference type="Rhea" id="RHEA:38951"/>
        <dbReference type="ChEBI" id="CHEBI:15377"/>
        <dbReference type="ChEBI" id="CHEBI:15378"/>
        <dbReference type="ChEBI" id="CHEBI:30616"/>
        <dbReference type="ChEBI" id="CHEBI:43474"/>
        <dbReference type="ChEBI" id="CHEBI:60119"/>
        <dbReference type="ChEBI" id="CHEBI:456216"/>
    </reaction>
    <physiologicalReaction direction="left-to-right" evidence="2">
        <dbReference type="Rhea" id="RHEA:38952"/>
    </physiologicalReaction>
</comment>
<comment type="catalytic activity">
    <reaction evidence="2">
        <text>estrone 3-sulfate(in) + ATP + H2O = estrone 3-sulfate(out) + ADP + phosphate + H(+)</text>
        <dbReference type="Rhea" id="RHEA:61348"/>
        <dbReference type="ChEBI" id="CHEBI:15377"/>
        <dbReference type="ChEBI" id="CHEBI:15378"/>
        <dbReference type="ChEBI" id="CHEBI:30616"/>
        <dbReference type="ChEBI" id="CHEBI:43474"/>
        <dbReference type="ChEBI" id="CHEBI:60050"/>
        <dbReference type="ChEBI" id="CHEBI:456216"/>
    </reaction>
    <physiologicalReaction direction="left-to-right" evidence="2">
        <dbReference type="Rhea" id="RHEA:61349"/>
    </physiologicalReaction>
</comment>
<comment type="catalytic activity">
    <reaction evidence="2">
        <text>dehydroepiandrosterone 3-sulfate(in) + ATP + H2O = dehydroepiandrosterone 3-sulfate(out) + ADP + phosphate + H(+)</text>
        <dbReference type="Rhea" id="RHEA:61364"/>
        <dbReference type="ChEBI" id="CHEBI:15377"/>
        <dbReference type="ChEBI" id="CHEBI:15378"/>
        <dbReference type="ChEBI" id="CHEBI:30616"/>
        <dbReference type="ChEBI" id="CHEBI:43474"/>
        <dbReference type="ChEBI" id="CHEBI:57905"/>
        <dbReference type="ChEBI" id="CHEBI:456216"/>
    </reaction>
    <physiologicalReaction direction="left-to-right" evidence="2">
        <dbReference type="Rhea" id="RHEA:61365"/>
    </physiologicalReaction>
</comment>
<comment type="catalytic activity">
    <reaction evidence="2">
        <text>4-methylumbelliferone sulfate(in) + ATP + H2O = 4-methylumbelliferone sulfate(out) + ADP + phosphate + H(+)</text>
        <dbReference type="Rhea" id="RHEA:61368"/>
        <dbReference type="ChEBI" id="CHEBI:15377"/>
        <dbReference type="ChEBI" id="CHEBI:15378"/>
        <dbReference type="ChEBI" id="CHEBI:30616"/>
        <dbReference type="ChEBI" id="CHEBI:43474"/>
        <dbReference type="ChEBI" id="CHEBI:144581"/>
        <dbReference type="ChEBI" id="CHEBI:456216"/>
    </reaction>
    <physiologicalReaction direction="left-to-right" evidence="2">
        <dbReference type="Rhea" id="RHEA:61369"/>
    </physiologicalReaction>
</comment>
<comment type="catalytic activity">
    <reaction evidence="2">
        <text>5,7-dimethyl-2-methylamino-4-(3-pyridylmethyl)-1,3-benzothiazol-6-yl beta-D-glucuronate(in) + ATP + H2O = 5,7-dimethyl-2-methylamino-4-(3-pyridylmethyl)-1,3-benzothiazol-6-yl beta-D-glucuronate(out) + ADP + phosphate + H(+)</text>
        <dbReference type="Rhea" id="RHEA:61384"/>
        <dbReference type="ChEBI" id="CHEBI:15377"/>
        <dbReference type="ChEBI" id="CHEBI:15378"/>
        <dbReference type="ChEBI" id="CHEBI:30616"/>
        <dbReference type="ChEBI" id="CHEBI:43474"/>
        <dbReference type="ChEBI" id="CHEBI:144584"/>
        <dbReference type="ChEBI" id="CHEBI:456216"/>
    </reaction>
    <physiologicalReaction direction="left-to-right" evidence="2">
        <dbReference type="Rhea" id="RHEA:61385"/>
    </physiologicalReaction>
</comment>
<comment type="catalytic activity">
    <reaction evidence="2">
        <text>4-methylumbelliferone beta-D-glucuronate(in) + ATP + H2O = 4-methylumbelliferone beta-D-glucuronate(out) + ADP + phosphate + H(+)</text>
        <dbReference type="Rhea" id="RHEA:61372"/>
        <dbReference type="ChEBI" id="CHEBI:15377"/>
        <dbReference type="ChEBI" id="CHEBI:15378"/>
        <dbReference type="ChEBI" id="CHEBI:30616"/>
        <dbReference type="ChEBI" id="CHEBI:43474"/>
        <dbReference type="ChEBI" id="CHEBI:144582"/>
        <dbReference type="ChEBI" id="CHEBI:456216"/>
    </reaction>
    <physiologicalReaction direction="left-to-right" evidence="2">
        <dbReference type="Rhea" id="RHEA:61373"/>
    </physiologicalReaction>
</comment>
<comment type="catalytic activity">
    <reaction evidence="2">
        <text>5,7-dimethyl-2-methylamino-4-(3-pyridylmethyl)-1,3-benzothiazol-6-yl sulfate(in) + ATP + H2O = 5,7-dimethyl-2-methylamino-4-(3-pyridylmethyl)-1,3-benzothiazol-6-yl sulfate(out) + ADP + phosphate + H(+)</text>
        <dbReference type="Rhea" id="RHEA:61376"/>
        <dbReference type="ChEBI" id="CHEBI:15377"/>
        <dbReference type="ChEBI" id="CHEBI:15378"/>
        <dbReference type="ChEBI" id="CHEBI:30616"/>
        <dbReference type="ChEBI" id="CHEBI:43474"/>
        <dbReference type="ChEBI" id="CHEBI:144583"/>
        <dbReference type="ChEBI" id="CHEBI:456216"/>
    </reaction>
    <physiologicalReaction direction="left-to-right" evidence="2">
        <dbReference type="Rhea" id="RHEA:61377"/>
    </physiologicalReaction>
</comment>
<comment type="catalytic activity">
    <reaction evidence="2">
        <text>17beta-estradiol 17-O-(beta-D-glucuronate)(in) + ATP + H2O = 17beta-estradiol 17-O-(beta-D-glucuronate)(out) + ADP + phosphate + H(+)</text>
        <dbReference type="Rhea" id="RHEA:60128"/>
        <dbReference type="ChEBI" id="CHEBI:15377"/>
        <dbReference type="ChEBI" id="CHEBI:15378"/>
        <dbReference type="ChEBI" id="CHEBI:30616"/>
        <dbReference type="ChEBI" id="CHEBI:43474"/>
        <dbReference type="ChEBI" id="CHEBI:82961"/>
        <dbReference type="ChEBI" id="CHEBI:456216"/>
    </reaction>
    <physiologicalReaction direction="left-to-right" evidence="2">
        <dbReference type="Rhea" id="RHEA:60129"/>
    </physiologicalReaction>
</comment>
<comment type="catalytic activity">
    <reaction evidence="2">
        <text>methotrexate(in) + ATP + H2O = methotrexate(out) + ADP + phosphate + H(+)</text>
        <dbReference type="Rhea" id="RHEA:61356"/>
        <dbReference type="ChEBI" id="CHEBI:15377"/>
        <dbReference type="ChEBI" id="CHEBI:15378"/>
        <dbReference type="ChEBI" id="CHEBI:30616"/>
        <dbReference type="ChEBI" id="CHEBI:43474"/>
        <dbReference type="ChEBI" id="CHEBI:50681"/>
        <dbReference type="ChEBI" id="CHEBI:456216"/>
    </reaction>
    <physiologicalReaction direction="left-to-right" evidence="2">
        <dbReference type="Rhea" id="RHEA:61357"/>
    </physiologicalReaction>
</comment>
<comment type="catalytic activity">
    <reaction evidence="1">
        <text>riboflavin(in) + ATP + H2O = riboflavin(out) + ADP + phosphate + H(+)</text>
        <dbReference type="Rhea" id="RHEA:61352"/>
        <dbReference type="ChEBI" id="CHEBI:15377"/>
        <dbReference type="ChEBI" id="CHEBI:15378"/>
        <dbReference type="ChEBI" id="CHEBI:30616"/>
        <dbReference type="ChEBI" id="CHEBI:43474"/>
        <dbReference type="ChEBI" id="CHEBI:57986"/>
        <dbReference type="ChEBI" id="CHEBI:456216"/>
    </reaction>
    <physiologicalReaction direction="left-to-right" evidence="1">
        <dbReference type="Rhea" id="RHEA:61353"/>
    </physiologicalReaction>
</comment>
<comment type="catalytic activity">
    <reaction evidence="1">
        <text>pheophorbide a(in) + ATP + H2O = pheophorbide a(out) + ADP + phosphate + H(+)</text>
        <dbReference type="Rhea" id="RHEA:61360"/>
        <dbReference type="ChEBI" id="CHEBI:15377"/>
        <dbReference type="ChEBI" id="CHEBI:15378"/>
        <dbReference type="ChEBI" id="CHEBI:30616"/>
        <dbReference type="ChEBI" id="CHEBI:43474"/>
        <dbReference type="ChEBI" id="CHEBI:58687"/>
        <dbReference type="ChEBI" id="CHEBI:456216"/>
    </reaction>
    <physiologicalReaction direction="left-to-right" evidence="1">
        <dbReference type="Rhea" id="RHEA:61361"/>
    </physiologicalReaction>
</comment>
<comment type="catalytic activity">
    <reaction evidence="1 2">
        <text>itaconate(in) + ATP + H2O = itaconate(out) + ADP + phosphate + H(+)</text>
        <dbReference type="Rhea" id="RHEA:82291"/>
        <dbReference type="ChEBI" id="CHEBI:15377"/>
        <dbReference type="ChEBI" id="CHEBI:15378"/>
        <dbReference type="ChEBI" id="CHEBI:17240"/>
        <dbReference type="ChEBI" id="CHEBI:30616"/>
        <dbReference type="ChEBI" id="CHEBI:43474"/>
        <dbReference type="ChEBI" id="CHEBI:456216"/>
    </reaction>
    <physiologicalReaction direction="left-to-right" evidence="1 2">
        <dbReference type="Rhea" id="RHEA:82292"/>
    </physiologicalReaction>
</comment>
<comment type="subunit">
    <text evidence="2">Homodimer; disulfide-linked. The minimal functional unit is a homodimer, but the major oligomeric form in plasma membrane is a homotetramer with possibility of higher order oligomerization up to homododecamers.</text>
</comment>
<comment type="subcellular location">
    <subcellularLocation>
        <location evidence="2">Cell membrane</location>
        <topology evidence="3">Multi-pass membrane protein</topology>
    </subcellularLocation>
    <subcellularLocation>
        <location evidence="2">Apical cell membrane</location>
        <topology evidence="3">Multi-pass membrane protein</topology>
    </subcellularLocation>
    <subcellularLocation>
        <location evidence="2">Mitochondrion membrane</location>
        <topology evidence="3">Multi-pass membrane protein</topology>
    </subcellularLocation>
    <text evidence="2">Enriched in membrane lipid rafts.</text>
</comment>
<comment type="domain">
    <text evidence="2">The extracellular loop 3 (ECL3) is involved in binding porphyrins and transfer them to other carriers, probably albumin.</text>
</comment>
<comment type="PTM">
    <text evidence="2">N-glycosylated. Glycosylation-deficient ABCG2 is normally expressed and functional.</text>
</comment>
<comment type="PTM">
    <text evidence="2">Phosphorylated. Phosphorylation may regulate the localization to the plasma membrane, the homooligomerization and therefore, the activity of the transporter.</text>
</comment>
<comment type="similarity">
    <text evidence="6">Belongs to the ABC transporter superfamily. ABCG family. Eye pigment precursor importer (TC 3.A.1.204) subfamily.</text>
</comment>
<accession>Q5MB13</accession>
<keyword id="KW-0067">ATP-binding</keyword>
<keyword id="KW-1003">Cell membrane</keyword>
<keyword id="KW-1015">Disulfide bond</keyword>
<keyword id="KW-0325">Glycoprotein</keyword>
<keyword id="KW-0445">Lipid transport</keyword>
<keyword id="KW-0472">Membrane</keyword>
<keyword id="KW-0496">Mitochondrion</keyword>
<keyword id="KW-0547">Nucleotide-binding</keyword>
<keyword id="KW-0597">Phosphoprotein</keyword>
<keyword id="KW-1185">Reference proteome</keyword>
<keyword id="KW-1278">Translocase</keyword>
<keyword id="KW-0812">Transmembrane</keyword>
<keyword id="KW-1133">Transmembrane helix</keyword>
<keyword id="KW-0813">Transport</keyword>
<proteinExistence type="evidence at transcript level"/>
<feature type="chain" id="PRO_0000093387" description="Broad substrate specificity ATP-binding cassette transporter ABCG2">
    <location>
        <begin position="1"/>
        <end position="654"/>
    </location>
</feature>
<feature type="topological domain" description="Cytoplasmic" evidence="3">
    <location>
        <begin position="1"/>
        <end position="394"/>
    </location>
</feature>
<feature type="transmembrane region" description="Helical" evidence="3">
    <location>
        <begin position="395"/>
        <end position="415"/>
    </location>
</feature>
<feature type="topological domain" description="Extracellular" evidence="3">
    <location>
        <begin position="416"/>
        <end position="427"/>
    </location>
</feature>
<feature type="transmembrane region" description="Helical" evidence="3">
    <location>
        <begin position="428"/>
        <end position="448"/>
    </location>
</feature>
<feature type="topological domain" description="Cytoplasmic" evidence="3">
    <location>
        <begin position="449"/>
        <end position="476"/>
    </location>
</feature>
<feature type="transmembrane region" description="Helical" evidence="3">
    <location>
        <begin position="477"/>
        <end position="497"/>
    </location>
</feature>
<feature type="topological domain" description="Extracellular" evidence="3">
    <location>
        <begin position="498"/>
        <end position="505"/>
    </location>
</feature>
<feature type="transmembrane region" description="Helical" evidence="3">
    <location>
        <begin position="506"/>
        <end position="526"/>
    </location>
</feature>
<feature type="topological domain" description="Cytoplasmic" evidence="3">
    <location>
        <begin position="527"/>
        <end position="534"/>
    </location>
</feature>
<feature type="transmembrane region" description="Helical" evidence="3">
    <location>
        <begin position="535"/>
        <end position="555"/>
    </location>
</feature>
<feature type="topological domain" description="Extracellular" evidence="3">
    <location>
        <begin position="556"/>
        <end position="629"/>
    </location>
</feature>
<feature type="transmembrane region" description="Helical" evidence="3">
    <location>
        <begin position="630"/>
        <end position="650"/>
    </location>
</feature>
<feature type="topological domain" description="Cytoplasmic" evidence="3">
    <location>
        <begin position="651"/>
        <end position="654"/>
    </location>
</feature>
<feature type="domain" description="ABC transporter" evidence="4">
    <location>
        <begin position="37"/>
        <end position="286"/>
    </location>
</feature>
<feature type="domain" description="ABC transmembrane type-2">
    <location>
        <begin position="388"/>
        <end position="650"/>
    </location>
</feature>
<feature type="binding site" evidence="4">
    <location>
        <begin position="80"/>
        <end position="87"/>
    </location>
    <ligand>
        <name>ATP</name>
        <dbReference type="ChEBI" id="CHEBI:30616"/>
    </ligand>
</feature>
<feature type="binding site" evidence="2">
    <location>
        <begin position="184"/>
        <end position="190"/>
    </location>
    <ligand>
        <name>ATP</name>
        <dbReference type="ChEBI" id="CHEBI:30616"/>
    </ligand>
</feature>
<feature type="binding site" evidence="2">
    <location>
        <position position="211"/>
    </location>
    <ligand>
        <name>ATP</name>
        <dbReference type="ChEBI" id="CHEBI:30616"/>
    </ligand>
</feature>
<feature type="binding site" evidence="2">
    <location>
        <position position="243"/>
    </location>
    <ligand>
        <name>ATP</name>
        <dbReference type="ChEBI" id="CHEBI:30616"/>
    </ligand>
</feature>
<feature type="glycosylation site" description="N-linked (GlcNAc...) asparagine" evidence="3">
    <location>
        <position position="417"/>
    </location>
</feature>
<feature type="glycosylation site" description="N-linked (GlcNAc...) asparagine" evidence="3">
    <location>
        <position position="556"/>
    </location>
</feature>
<feature type="glycosylation site" description="N-linked (GlcNAc...) asparagine" evidence="3">
    <location>
        <position position="595"/>
    </location>
</feature>
<feature type="glycosylation site" description="N-linked (GlcNAc...) asparagine" evidence="3">
    <location>
        <position position="599"/>
    </location>
</feature>
<feature type="disulfide bond" evidence="2">
    <location>
        <begin position="591"/>
        <end position="607"/>
    </location>
</feature>
<feature type="disulfide bond" description="Interchain" evidence="2">
    <location>
        <position position="602"/>
    </location>
</feature>
<organism>
    <name type="scientific">Macaca mulatta</name>
    <name type="common">Rhesus macaque</name>
    <dbReference type="NCBI Taxonomy" id="9544"/>
    <lineage>
        <taxon>Eukaryota</taxon>
        <taxon>Metazoa</taxon>
        <taxon>Chordata</taxon>
        <taxon>Craniata</taxon>
        <taxon>Vertebrata</taxon>
        <taxon>Euteleostomi</taxon>
        <taxon>Mammalia</taxon>
        <taxon>Eutheria</taxon>
        <taxon>Euarchontoglires</taxon>
        <taxon>Primates</taxon>
        <taxon>Haplorrhini</taxon>
        <taxon>Catarrhini</taxon>
        <taxon>Cercopithecidae</taxon>
        <taxon>Cercopithecinae</taxon>
        <taxon>Macaca</taxon>
    </lineage>
</organism>
<gene>
    <name type="primary">ABCG2</name>
</gene>
<sequence length="654" mass="72459">MSSSNVEVFIPMSQENTNGFPTTTSNDRKAFTEGAVLSFHNICYRVKVKSGFLPGRKPVEKEILSNINGIMKPGLNAILGPTGGGKSSLLDVLAARKDPSGLSGDVLINGALRPTNFKCNSGYVVQDDVVMGTLTVRENLQFSAALRLPTTMTNHEKNERINRVIQELGLDKVADSKVGTQFIRGVSGGERKRTSIGMELITDPSILFLDEPTTGLDSSTANAVLLLLKRMSKQGRTIIFSIHQPRYSIFKLFDSLTLLASGRLMFHGPAQEALGYFESAGYHCEAYNNPADFFLDIINGDSTAVALNREEDFKATEIIEPSKRDKPLVEKLAEIYVDSSFYKETKAELHQLSGGEKKKITVFKEISYTTSFCHQLRWVSKRSFKNLLGNPQASIAQIIVTVILGLVIGAIYFGLNNDSTGIQNRAGVLFFLTTNQCFSSVSAVELFVVEKKLFIHEYISGYYRVSSYFFGKLLSDLLPMRMLPSIIFTCIVYFMLGLKPTADAFFIMMFTLMMVAYSASSMALAIAAGQSVVSVATLLMTICFVFMMIFSGLLVNLTTIASWLSWLQYFSIPRYGFTALQHNEFLGQNFCPGLNATVNNTCNYATCTGEEYLAKQGIDLSPWGLWKNHVALACMIVIFLTIAYLKLLFLKKYS</sequence>
<dbReference type="EC" id="7.6.2.2" evidence="2"/>
<dbReference type="EMBL" id="AY841878">
    <property type="protein sequence ID" value="AAW28901.1"/>
    <property type="molecule type" value="mRNA"/>
</dbReference>
<dbReference type="RefSeq" id="NP_001028091.1">
    <property type="nucleotide sequence ID" value="NM_001032919.1"/>
</dbReference>
<dbReference type="SMR" id="Q5MB13"/>
<dbReference type="FunCoup" id="Q5MB13">
    <property type="interactions" value="374"/>
</dbReference>
<dbReference type="STRING" id="9544.ENSMMUP00000011540"/>
<dbReference type="GlyCosmos" id="Q5MB13">
    <property type="glycosylation" value="4 sites, No reported glycans"/>
</dbReference>
<dbReference type="PaxDb" id="9544-ENSMMUP00000011540"/>
<dbReference type="GeneID" id="574307"/>
<dbReference type="KEGG" id="mcc:574307"/>
<dbReference type="CTD" id="9429"/>
<dbReference type="eggNOG" id="KOG0061">
    <property type="taxonomic scope" value="Eukaryota"/>
</dbReference>
<dbReference type="InParanoid" id="Q5MB13"/>
<dbReference type="OrthoDB" id="66620at2759"/>
<dbReference type="Proteomes" id="UP000006718">
    <property type="component" value="Unassembled WGS sequence"/>
</dbReference>
<dbReference type="GO" id="GO:0016324">
    <property type="term" value="C:apical plasma membrane"/>
    <property type="evidence" value="ECO:0000250"/>
    <property type="project" value="UniProtKB"/>
</dbReference>
<dbReference type="GO" id="GO:0031526">
    <property type="term" value="C:brush border membrane"/>
    <property type="evidence" value="ECO:0000250"/>
    <property type="project" value="UniProtKB"/>
</dbReference>
<dbReference type="GO" id="GO:0045121">
    <property type="term" value="C:membrane raft"/>
    <property type="evidence" value="ECO:0000250"/>
    <property type="project" value="UniProtKB"/>
</dbReference>
<dbReference type="GO" id="GO:0031966">
    <property type="term" value="C:mitochondrial membrane"/>
    <property type="evidence" value="ECO:0007669"/>
    <property type="project" value="UniProtKB-SubCell"/>
</dbReference>
<dbReference type="GO" id="GO:0005886">
    <property type="term" value="C:plasma membrane"/>
    <property type="evidence" value="ECO:0000318"/>
    <property type="project" value="GO_Central"/>
</dbReference>
<dbReference type="GO" id="GO:0008559">
    <property type="term" value="F:ABC-type xenobiotic transporter activity"/>
    <property type="evidence" value="ECO:0007669"/>
    <property type="project" value="UniProtKB-EC"/>
</dbReference>
<dbReference type="GO" id="GO:0005524">
    <property type="term" value="F:ATP binding"/>
    <property type="evidence" value="ECO:0007669"/>
    <property type="project" value="UniProtKB-KW"/>
</dbReference>
<dbReference type="GO" id="GO:0016887">
    <property type="term" value="F:ATP hydrolysis activity"/>
    <property type="evidence" value="ECO:0007669"/>
    <property type="project" value="InterPro"/>
</dbReference>
<dbReference type="GO" id="GO:0042626">
    <property type="term" value="F:ATPase-coupled transmembrane transporter activity"/>
    <property type="evidence" value="ECO:0000250"/>
    <property type="project" value="UniProtKB"/>
</dbReference>
<dbReference type="GO" id="GO:0015225">
    <property type="term" value="F:biotin transmembrane transporter activity"/>
    <property type="evidence" value="ECO:0000250"/>
    <property type="project" value="UniProtKB"/>
</dbReference>
<dbReference type="GO" id="GO:0015562">
    <property type="term" value="F:efflux transmembrane transporter activity"/>
    <property type="evidence" value="ECO:0000250"/>
    <property type="project" value="UniProtKB"/>
</dbReference>
<dbReference type="GO" id="GO:0046983">
    <property type="term" value="F:protein dimerization activity"/>
    <property type="evidence" value="ECO:0007669"/>
    <property type="project" value="UniProtKB-ARBA"/>
</dbReference>
<dbReference type="GO" id="GO:0032217">
    <property type="term" value="F:riboflavin transmembrane transporter activity"/>
    <property type="evidence" value="ECO:0000250"/>
    <property type="project" value="UniProtKB"/>
</dbReference>
<dbReference type="GO" id="GO:0015143">
    <property type="term" value="F:urate transmembrane transporter activity"/>
    <property type="evidence" value="ECO:0000250"/>
    <property type="project" value="UniProtKB"/>
</dbReference>
<dbReference type="GO" id="GO:0015878">
    <property type="term" value="P:biotin transport"/>
    <property type="evidence" value="ECO:0000250"/>
    <property type="project" value="UniProtKB"/>
</dbReference>
<dbReference type="GO" id="GO:0006869">
    <property type="term" value="P:lipid transport"/>
    <property type="evidence" value="ECO:0007669"/>
    <property type="project" value="UniProtKB-KW"/>
</dbReference>
<dbReference type="GO" id="GO:0097744">
    <property type="term" value="P:renal urate salt excretion"/>
    <property type="evidence" value="ECO:0000250"/>
    <property type="project" value="UniProtKB"/>
</dbReference>
<dbReference type="GO" id="GO:0032218">
    <property type="term" value="P:riboflavin transport"/>
    <property type="evidence" value="ECO:0000250"/>
    <property type="project" value="UniProtKB"/>
</dbReference>
<dbReference type="GO" id="GO:0055085">
    <property type="term" value="P:transmembrane transport"/>
    <property type="evidence" value="ECO:0000250"/>
    <property type="project" value="UniProtKB"/>
</dbReference>
<dbReference type="CDD" id="cd03213">
    <property type="entry name" value="ABCG_EPDR"/>
    <property type="match status" value="1"/>
</dbReference>
<dbReference type="FunFam" id="3.40.50.300:FF:000622">
    <property type="entry name" value="ATP-binding cassette sub-family G member 2"/>
    <property type="match status" value="1"/>
</dbReference>
<dbReference type="Gene3D" id="3.40.50.300">
    <property type="entry name" value="P-loop containing nucleotide triphosphate hydrolases"/>
    <property type="match status" value="1"/>
</dbReference>
<dbReference type="InterPro" id="IPR003593">
    <property type="entry name" value="AAA+_ATPase"/>
</dbReference>
<dbReference type="InterPro" id="IPR013525">
    <property type="entry name" value="ABC2_TM"/>
</dbReference>
<dbReference type="InterPro" id="IPR003439">
    <property type="entry name" value="ABC_transporter-like_ATP-bd"/>
</dbReference>
<dbReference type="InterPro" id="IPR043926">
    <property type="entry name" value="ABCG_dom"/>
</dbReference>
<dbReference type="InterPro" id="IPR050352">
    <property type="entry name" value="ABCG_transporters"/>
</dbReference>
<dbReference type="InterPro" id="IPR027417">
    <property type="entry name" value="P-loop_NTPase"/>
</dbReference>
<dbReference type="PANTHER" id="PTHR48041">
    <property type="entry name" value="ABC TRANSPORTER G FAMILY MEMBER 28"/>
    <property type="match status" value="1"/>
</dbReference>
<dbReference type="PANTHER" id="PTHR48041:SF92">
    <property type="entry name" value="BROAD SUBSTRATE SPECIFICITY ATP-BINDING CASSETTE TRANSPORTER ABCG2"/>
    <property type="match status" value="1"/>
</dbReference>
<dbReference type="Pfam" id="PF01061">
    <property type="entry name" value="ABC2_membrane"/>
    <property type="match status" value="1"/>
</dbReference>
<dbReference type="Pfam" id="PF19055">
    <property type="entry name" value="ABC2_membrane_7"/>
    <property type="match status" value="1"/>
</dbReference>
<dbReference type="Pfam" id="PF00005">
    <property type="entry name" value="ABC_tran"/>
    <property type="match status" value="1"/>
</dbReference>
<dbReference type="SMART" id="SM00382">
    <property type="entry name" value="AAA"/>
    <property type="match status" value="1"/>
</dbReference>
<dbReference type="SUPFAM" id="SSF52540">
    <property type="entry name" value="P-loop containing nucleoside triphosphate hydrolases"/>
    <property type="match status" value="1"/>
</dbReference>
<dbReference type="PROSITE" id="PS50893">
    <property type="entry name" value="ABC_TRANSPORTER_2"/>
    <property type="match status" value="1"/>
</dbReference>
<name>ABCG2_MACMU</name>
<reference key="1">
    <citation type="journal article" date="2005" name="J. Biol. Chem.">
        <title>Cloning and functional analysis of the rhesus macaque ABCG2 gene. Forced expression confers an SP phenotype among hematopoietic stem cell progeny in vivo.</title>
        <authorList>
            <person name="Ueda T."/>
            <person name="Brenner S."/>
            <person name="Malech H.L."/>
            <person name="Langemeijer S.M."/>
            <person name="Perl S."/>
            <person name="Kirby M."/>
            <person name="Phang O.A."/>
            <person name="Krouse A.E."/>
            <person name="Donahue R.E."/>
            <person name="Kang E.M."/>
            <person name="Tisdale J.F."/>
        </authorList>
    </citation>
    <scope>NUCLEOTIDE SEQUENCE [MRNA]</scope>
    <scope>FUNCTION</scope>
    <source>
        <tissue>Kidney</tissue>
    </source>
</reference>
<protein>
    <recommendedName>
        <fullName evidence="6">Broad substrate specificity ATP-binding cassette transporter ABCG2</fullName>
        <ecNumber evidence="2">7.6.2.2</ecNumber>
    </recommendedName>
    <alternativeName>
        <fullName>ATP-binding cassette sub-family G member 2</fullName>
    </alternativeName>
    <alternativeName>
        <fullName>Urate exporter</fullName>
    </alternativeName>
    <cdAntigenName>CD338</cdAntigenName>
</protein>
<evidence type="ECO:0000250" key="1">
    <source>
        <dbReference type="UniProtKB" id="Q7TMS5"/>
    </source>
</evidence>
<evidence type="ECO:0000250" key="2">
    <source>
        <dbReference type="UniProtKB" id="Q9UNQ0"/>
    </source>
</evidence>
<evidence type="ECO:0000255" key="3"/>
<evidence type="ECO:0000255" key="4">
    <source>
        <dbReference type="PROSITE-ProRule" id="PRU00434"/>
    </source>
</evidence>
<evidence type="ECO:0000269" key="5">
    <source>
    </source>
</evidence>
<evidence type="ECO:0000305" key="6"/>